<evidence type="ECO:0000255" key="1">
    <source>
        <dbReference type="HAMAP-Rule" id="MF_01261"/>
    </source>
</evidence>
<sequence length="410" mass="45555">MNIYAVGGAIRDELLGVPVQDRDYVVVGATPEQMVAQGYRPVGKDFPVFLHPQTHEEYALARTERKTAAGYHGFQFFYAPDVTLEEDLARRDLTINAMAREVRPDGELTGPVIDPFNGQGDVQARVFRHVSDAFLEDPVRILRIARFAARFVDFTVAPETLALMRKMVADGEVDALVAERVWQEVSRGLMEKKPSRMFEVLRECGALARILPEIDALFGVLQRADYHPEVDTGVHVMMVVDHAAQQGYALQVRFAALAHDLGKATTPEDMLPRHIGHEGRSVDLLKPLCERLRVPNDCRDLAVLVAREHGNIHRVMEMGAAALVRLLERSDAIRKPARFAEALQACEADARGRLGFERREYPQAERLRVALVAARGVDAGAVAKRLADAPAGIKDALHQERVRAVELAIS</sequence>
<protein>
    <recommendedName>
        <fullName evidence="1">Multifunctional CCA protein</fullName>
    </recommendedName>
    <domain>
        <recommendedName>
            <fullName evidence="1">CCA-adding enzyme</fullName>
            <ecNumber evidence="1">2.7.7.72</ecNumber>
        </recommendedName>
        <alternativeName>
            <fullName evidence="1">CCA tRNA nucleotidyltransferase</fullName>
        </alternativeName>
        <alternativeName>
            <fullName evidence="1">tRNA CCA-pyrophosphorylase</fullName>
        </alternativeName>
        <alternativeName>
            <fullName evidence="1">tRNA adenylyl-/cytidylyl-transferase</fullName>
        </alternativeName>
        <alternativeName>
            <fullName evidence="1">tRNA nucleotidyltransferase</fullName>
        </alternativeName>
        <alternativeName>
            <fullName evidence="1">tRNA-NT</fullName>
        </alternativeName>
    </domain>
    <domain>
        <recommendedName>
            <fullName evidence="1">2'-nucleotidase</fullName>
            <ecNumber evidence="1">3.1.3.-</ecNumber>
        </recommendedName>
    </domain>
    <domain>
        <recommendedName>
            <fullName evidence="1">2',3'-cyclic phosphodiesterase</fullName>
            <ecNumber evidence="1">3.1.4.-</ecNumber>
        </recommendedName>
    </domain>
    <domain>
        <recommendedName>
            <fullName evidence="1">Phosphatase</fullName>
            <ecNumber evidence="1">3.1.3.-</ecNumber>
        </recommendedName>
    </domain>
</protein>
<proteinExistence type="inferred from homology"/>
<reference key="1">
    <citation type="journal article" date="2011" name="J. Bacteriol.">
        <title>Complete genome sequence of the plant growth-promoting endophyte Burkholderia phytofirmans strain PsJN.</title>
        <authorList>
            <person name="Weilharter A."/>
            <person name="Mitter B."/>
            <person name="Shin M.V."/>
            <person name="Chain P.S."/>
            <person name="Nowak J."/>
            <person name="Sessitsch A."/>
        </authorList>
    </citation>
    <scope>NUCLEOTIDE SEQUENCE [LARGE SCALE GENOMIC DNA]</scope>
    <source>
        <strain>DSM 17436 / LMG 22146 / PsJN</strain>
    </source>
</reference>
<accession>B2T6V1</accession>
<organism>
    <name type="scientific">Paraburkholderia phytofirmans (strain DSM 17436 / LMG 22146 / PsJN)</name>
    <name type="common">Burkholderia phytofirmans</name>
    <dbReference type="NCBI Taxonomy" id="398527"/>
    <lineage>
        <taxon>Bacteria</taxon>
        <taxon>Pseudomonadati</taxon>
        <taxon>Pseudomonadota</taxon>
        <taxon>Betaproteobacteria</taxon>
        <taxon>Burkholderiales</taxon>
        <taxon>Burkholderiaceae</taxon>
        <taxon>Paraburkholderia</taxon>
    </lineage>
</organism>
<comment type="function">
    <text evidence="1">Catalyzes the addition and repair of the essential 3'-terminal CCA sequence in tRNAs without using a nucleic acid template. Adds these three nucleotides in the order of C, C, and A to the tRNA nucleotide-73, using CTP and ATP as substrates and producing inorganic pyrophosphate. tRNA 3'-terminal CCA addition is required both for tRNA processing and repair. Also involved in tRNA surveillance by mediating tandem CCA addition to generate a CCACCA at the 3' terminus of unstable tRNAs. While stable tRNAs receive only 3'-terminal CCA, unstable tRNAs are marked with CCACCA and rapidly degraded.</text>
</comment>
<comment type="catalytic activity">
    <reaction evidence="1">
        <text>a tRNA precursor + 2 CTP + ATP = a tRNA with a 3' CCA end + 3 diphosphate</text>
        <dbReference type="Rhea" id="RHEA:14433"/>
        <dbReference type="Rhea" id="RHEA-COMP:10465"/>
        <dbReference type="Rhea" id="RHEA-COMP:10468"/>
        <dbReference type="ChEBI" id="CHEBI:30616"/>
        <dbReference type="ChEBI" id="CHEBI:33019"/>
        <dbReference type="ChEBI" id="CHEBI:37563"/>
        <dbReference type="ChEBI" id="CHEBI:74896"/>
        <dbReference type="ChEBI" id="CHEBI:83071"/>
        <dbReference type="EC" id="2.7.7.72"/>
    </reaction>
</comment>
<comment type="catalytic activity">
    <reaction evidence="1">
        <text>a tRNA with a 3' CCA end + 2 CTP + ATP = a tRNA with a 3' CCACCA end + 3 diphosphate</text>
        <dbReference type="Rhea" id="RHEA:76235"/>
        <dbReference type="Rhea" id="RHEA-COMP:10468"/>
        <dbReference type="Rhea" id="RHEA-COMP:18655"/>
        <dbReference type="ChEBI" id="CHEBI:30616"/>
        <dbReference type="ChEBI" id="CHEBI:33019"/>
        <dbReference type="ChEBI" id="CHEBI:37563"/>
        <dbReference type="ChEBI" id="CHEBI:83071"/>
        <dbReference type="ChEBI" id="CHEBI:195187"/>
    </reaction>
    <physiologicalReaction direction="left-to-right" evidence="1">
        <dbReference type="Rhea" id="RHEA:76236"/>
    </physiologicalReaction>
</comment>
<comment type="cofactor">
    <cofactor evidence="1">
        <name>Mg(2+)</name>
        <dbReference type="ChEBI" id="CHEBI:18420"/>
    </cofactor>
    <text evidence="1">Magnesium is required for nucleotidyltransferase activity.</text>
</comment>
<comment type="cofactor">
    <cofactor evidence="1">
        <name>Ni(2+)</name>
        <dbReference type="ChEBI" id="CHEBI:49786"/>
    </cofactor>
    <text evidence="1">Nickel for phosphatase activity.</text>
</comment>
<comment type="subunit">
    <text evidence="1">Monomer. Can also form homodimers and oligomers.</text>
</comment>
<comment type="domain">
    <text evidence="1">Comprises two domains: an N-terminal domain containing the nucleotidyltransferase activity and a C-terminal HD domain associated with both phosphodiesterase and phosphatase activities.</text>
</comment>
<comment type="miscellaneous">
    <text evidence="1">A single active site specifically recognizes both ATP and CTP and is responsible for their addition.</text>
</comment>
<comment type="similarity">
    <text evidence="1">Belongs to the tRNA nucleotidyltransferase/poly(A) polymerase family. Bacterial CCA-adding enzyme type 1 subfamily.</text>
</comment>
<dbReference type="EC" id="2.7.7.72" evidence="1"/>
<dbReference type="EC" id="3.1.3.-" evidence="1"/>
<dbReference type="EC" id="3.1.4.-" evidence="1"/>
<dbReference type="EMBL" id="CP001052">
    <property type="protein sequence ID" value="ACD18123.1"/>
    <property type="molecule type" value="Genomic_DNA"/>
</dbReference>
<dbReference type="RefSeq" id="WP_012434651.1">
    <property type="nucleotide sequence ID" value="NC_010681.1"/>
</dbReference>
<dbReference type="SMR" id="B2T6V1"/>
<dbReference type="STRING" id="398527.Bphyt_3735"/>
<dbReference type="KEGG" id="bpy:Bphyt_3735"/>
<dbReference type="eggNOG" id="COG0617">
    <property type="taxonomic scope" value="Bacteria"/>
</dbReference>
<dbReference type="HOGENOM" id="CLU_015961_1_1_4"/>
<dbReference type="OrthoDB" id="9805698at2"/>
<dbReference type="Proteomes" id="UP000001739">
    <property type="component" value="Chromosome 1"/>
</dbReference>
<dbReference type="GO" id="GO:0005524">
    <property type="term" value="F:ATP binding"/>
    <property type="evidence" value="ECO:0007669"/>
    <property type="project" value="UniProtKB-UniRule"/>
</dbReference>
<dbReference type="GO" id="GO:0004810">
    <property type="term" value="F:CCA tRNA nucleotidyltransferase activity"/>
    <property type="evidence" value="ECO:0007669"/>
    <property type="project" value="UniProtKB-UniRule"/>
</dbReference>
<dbReference type="GO" id="GO:0004112">
    <property type="term" value="F:cyclic-nucleotide phosphodiesterase activity"/>
    <property type="evidence" value="ECO:0007669"/>
    <property type="project" value="UniProtKB-UniRule"/>
</dbReference>
<dbReference type="GO" id="GO:0000287">
    <property type="term" value="F:magnesium ion binding"/>
    <property type="evidence" value="ECO:0007669"/>
    <property type="project" value="UniProtKB-UniRule"/>
</dbReference>
<dbReference type="GO" id="GO:0016791">
    <property type="term" value="F:phosphatase activity"/>
    <property type="evidence" value="ECO:0007669"/>
    <property type="project" value="UniProtKB-UniRule"/>
</dbReference>
<dbReference type="GO" id="GO:0000049">
    <property type="term" value="F:tRNA binding"/>
    <property type="evidence" value="ECO:0007669"/>
    <property type="project" value="UniProtKB-UniRule"/>
</dbReference>
<dbReference type="GO" id="GO:0042245">
    <property type="term" value="P:RNA repair"/>
    <property type="evidence" value="ECO:0007669"/>
    <property type="project" value="UniProtKB-KW"/>
</dbReference>
<dbReference type="GO" id="GO:0001680">
    <property type="term" value="P:tRNA 3'-terminal CCA addition"/>
    <property type="evidence" value="ECO:0007669"/>
    <property type="project" value="UniProtKB-UniRule"/>
</dbReference>
<dbReference type="Gene3D" id="3.30.460.10">
    <property type="entry name" value="Beta Polymerase, domain 2"/>
    <property type="match status" value="1"/>
</dbReference>
<dbReference type="Gene3D" id="1.10.3090.10">
    <property type="entry name" value="cca-adding enzyme, domain 2"/>
    <property type="match status" value="1"/>
</dbReference>
<dbReference type="HAMAP" id="MF_01261">
    <property type="entry name" value="CCA_bact_type1"/>
    <property type="match status" value="1"/>
</dbReference>
<dbReference type="HAMAP" id="MF_01262">
    <property type="entry name" value="CCA_bact_type2"/>
    <property type="match status" value="1"/>
</dbReference>
<dbReference type="InterPro" id="IPR012006">
    <property type="entry name" value="CCA_bact"/>
</dbReference>
<dbReference type="InterPro" id="IPR006674">
    <property type="entry name" value="HD_domain"/>
</dbReference>
<dbReference type="InterPro" id="IPR043519">
    <property type="entry name" value="NT_sf"/>
</dbReference>
<dbReference type="InterPro" id="IPR002646">
    <property type="entry name" value="PolA_pol_head_dom"/>
</dbReference>
<dbReference type="InterPro" id="IPR032828">
    <property type="entry name" value="PolyA_RNA-bd"/>
</dbReference>
<dbReference type="InterPro" id="IPR050124">
    <property type="entry name" value="tRNA_CCA-adding_enzyme"/>
</dbReference>
<dbReference type="NCBIfam" id="NF008137">
    <property type="entry name" value="PRK10885.1"/>
    <property type="match status" value="1"/>
</dbReference>
<dbReference type="PANTHER" id="PTHR47545">
    <property type="entry name" value="MULTIFUNCTIONAL CCA PROTEIN"/>
    <property type="match status" value="1"/>
</dbReference>
<dbReference type="PANTHER" id="PTHR47545:SF1">
    <property type="entry name" value="MULTIFUNCTIONAL CCA PROTEIN"/>
    <property type="match status" value="1"/>
</dbReference>
<dbReference type="Pfam" id="PF01966">
    <property type="entry name" value="HD"/>
    <property type="match status" value="1"/>
</dbReference>
<dbReference type="Pfam" id="PF01743">
    <property type="entry name" value="PolyA_pol"/>
    <property type="match status" value="1"/>
</dbReference>
<dbReference type="Pfam" id="PF12627">
    <property type="entry name" value="PolyA_pol_RNAbd"/>
    <property type="match status" value="1"/>
</dbReference>
<dbReference type="PIRSF" id="PIRSF000813">
    <property type="entry name" value="CCA_bact"/>
    <property type="match status" value="1"/>
</dbReference>
<dbReference type="SUPFAM" id="SSF81301">
    <property type="entry name" value="Nucleotidyltransferase"/>
    <property type="match status" value="1"/>
</dbReference>
<dbReference type="SUPFAM" id="SSF81891">
    <property type="entry name" value="Poly A polymerase C-terminal region-like"/>
    <property type="match status" value="1"/>
</dbReference>
<dbReference type="PROSITE" id="PS51831">
    <property type="entry name" value="HD"/>
    <property type="match status" value="1"/>
</dbReference>
<feature type="chain" id="PRO_1000140028" description="Multifunctional CCA protein">
    <location>
        <begin position="1"/>
        <end position="410"/>
    </location>
</feature>
<feature type="domain" description="HD" evidence="1">
    <location>
        <begin position="232"/>
        <end position="333"/>
    </location>
</feature>
<feature type="binding site" evidence="1">
    <location>
        <position position="8"/>
    </location>
    <ligand>
        <name>ATP</name>
        <dbReference type="ChEBI" id="CHEBI:30616"/>
    </ligand>
</feature>
<feature type="binding site" evidence="1">
    <location>
        <position position="8"/>
    </location>
    <ligand>
        <name>CTP</name>
        <dbReference type="ChEBI" id="CHEBI:37563"/>
    </ligand>
</feature>
<feature type="binding site" evidence="1">
    <location>
        <position position="11"/>
    </location>
    <ligand>
        <name>ATP</name>
        <dbReference type="ChEBI" id="CHEBI:30616"/>
    </ligand>
</feature>
<feature type="binding site" evidence="1">
    <location>
        <position position="11"/>
    </location>
    <ligand>
        <name>CTP</name>
        <dbReference type="ChEBI" id="CHEBI:37563"/>
    </ligand>
</feature>
<feature type="binding site" evidence="1">
    <location>
        <position position="21"/>
    </location>
    <ligand>
        <name>Mg(2+)</name>
        <dbReference type="ChEBI" id="CHEBI:18420"/>
    </ligand>
</feature>
<feature type="binding site" evidence="1">
    <location>
        <position position="23"/>
    </location>
    <ligand>
        <name>Mg(2+)</name>
        <dbReference type="ChEBI" id="CHEBI:18420"/>
    </ligand>
</feature>
<feature type="binding site" evidence="1">
    <location>
        <position position="91"/>
    </location>
    <ligand>
        <name>ATP</name>
        <dbReference type="ChEBI" id="CHEBI:30616"/>
    </ligand>
</feature>
<feature type="binding site" evidence="1">
    <location>
        <position position="91"/>
    </location>
    <ligand>
        <name>CTP</name>
        <dbReference type="ChEBI" id="CHEBI:37563"/>
    </ligand>
</feature>
<feature type="binding site" evidence="1">
    <location>
        <position position="143"/>
    </location>
    <ligand>
        <name>ATP</name>
        <dbReference type="ChEBI" id="CHEBI:30616"/>
    </ligand>
</feature>
<feature type="binding site" evidence="1">
    <location>
        <position position="143"/>
    </location>
    <ligand>
        <name>CTP</name>
        <dbReference type="ChEBI" id="CHEBI:37563"/>
    </ligand>
</feature>
<feature type="binding site" evidence="1">
    <location>
        <position position="146"/>
    </location>
    <ligand>
        <name>ATP</name>
        <dbReference type="ChEBI" id="CHEBI:30616"/>
    </ligand>
</feature>
<feature type="binding site" evidence="1">
    <location>
        <position position="146"/>
    </location>
    <ligand>
        <name>CTP</name>
        <dbReference type="ChEBI" id="CHEBI:37563"/>
    </ligand>
</feature>
<keyword id="KW-0067">ATP-binding</keyword>
<keyword id="KW-0378">Hydrolase</keyword>
<keyword id="KW-0460">Magnesium</keyword>
<keyword id="KW-0479">Metal-binding</keyword>
<keyword id="KW-0511">Multifunctional enzyme</keyword>
<keyword id="KW-0533">Nickel</keyword>
<keyword id="KW-0547">Nucleotide-binding</keyword>
<keyword id="KW-0548">Nucleotidyltransferase</keyword>
<keyword id="KW-0692">RNA repair</keyword>
<keyword id="KW-0694">RNA-binding</keyword>
<keyword id="KW-0808">Transferase</keyword>
<keyword id="KW-0819">tRNA processing</keyword>
<gene>
    <name evidence="1" type="primary">cca</name>
    <name type="ordered locus">Bphyt_3735</name>
</gene>
<name>CCA_PARPJ</name>